<dbReference type="EMBL" id="AL161503">
    <property type="protein sequence ID" value="CAB81088.1"/>
    <property type="molecule type" value="Genomic_DNA"/>
</dbReference>
<dbReference type="EMBL" id="CP002687">
    <property type="protein sequence ID" value="AEE82523.1"/>
    <property type="molecule type" value="Genomic_DNA"/>
</dbReference>
<dbReference type="EMBL" id="BT003081">
    <property type="protein sequence ID" value="AAO23646.1"/>
    <property type="molecule type" value="mRNA"/>
</dbReference>
<dbReference type="EMBL" id="AY087774">
    <property type="protein sequence ID" value="AAM65310.1"/>
    <property type="molecule type" value="mRNA"/>
</dbReference>
<dbReference type="EMBL" id="AK227360">
    <property type="protein sequence ID" value="BAE99368.1"/>
    <property type="molecule type" value="mRNA"/>
</dbReference>
<dbReference type="PIR" id="F85068">
    <property type="entry name" value="F85068"/>
</dbReference>
<dbReference type="RefSeq" id="NP_567294.1">
    <property type="nucleotide sequence ID" value="NM_116785.4"/>
</dbReference>
<dbReference type="SMR" id="Q9M0U9"/>
<dbReference type="BioGRID" id="11207">
    <property type="interactions" value="20"/>
</dbReference>
<dbReference type="FunCoup" id="Q9M0U9">
    <property type="interactions" value="807"/>
</dbReference>
<dbReference type="IntAct" id="Q9M0U9">
    <property type="interactions" value="4"/>
</dbReference>
<dbReference type="STRING" id="3702.Q9M0U9"/>
<dbReference type="PaxDb" id="3702-AT4G05460.1"/>
<dbReference type="ProteomicsDB" id="234467"/>
<dbReference type="EnsemblPlants" id="AT4G05460.1">
    <property type="protein sequence ID" value="AT4G05460.1"/>
    <property type="gene ID" value="AT4G05460"/>
</dbReference>
<dbReference type="GeneID" id="825896"/>
<dbReference type="Gramene" id="AT4G05460.1">
    <property type="protein sequence ID" value="AT4G05460.1"/>
    <property type="gene ID" value="AT4G05460"/>
</dbReference>
<dbReference type="KEGG" id="ath:AT4G05460"/>
<dbReference type="Araport" id="AT4G05460"/>
<dbReference type="TAIR" id="AT4G05460">
    <property type="gene designation" value="SKIP19"/>
</dbReference>
<dbReference type="eggNOG" id="KOG1947">
    <property type="taxonomic scope" value="Eukaryota"/>
</dbReference>
<dbReference type="HOGENOM" id="CLU_044915_0_0_1"/>
<dbReference type="InParanoid" id="Q9M0U9"/>
<dbReference type="OMA" id="WRTIDIR"/>
<dbReference type="PhylomeDB" id="Q9M0U9"/>
<dbReference type="UniPathway" id="UPA00143"/>
<dbReference type="PRO" id="PR:Q9M0U9"/>
<dbReference type="Proteomes" id="UP000006548">
    <property type="component" value="Chromosome 4"/>
</dbReference>
<dbReference type="ExpressionAtlas" id="Q9M0U9">
    <property type="expression patterns" value="baseline and differential"/>
</dbReference>
<dbReference type="GO" id="GO:0005737">
    <property type="term" value="C:cytoplasm"/>
    <property type="evidence" value="ECO:0000314"/>
    <property type="project" value="TAIR"/>
</dbReference>
<dbReference type="GO" id="GO:0005634">
    <property type="term" value="C:nucleus"/>
    <property type="evidence" value="ECO:0000314"/>
    <property type="project" value="TAIR"/>
</dbReference>
<dbReference type="GO" id="GO:0016567">
    <property type="term" value="P:protein ubiquitination"/>
    <property type="evidence" value="ECO:0007669"/>
    <property type="project" value="UniProtKB-UniPathway"/>
</dbReference>
<dbReference type="CDD" id="cd22164">
    <property type="entry name" value="F-box_AtSKIP19-like"/>
    <property type="match status" value="1"/>
</dbReference>
<dbReference type="Gene3D" id="1.20.1280.50">
    <property type="match status" value="1"/>
</dbReference>
<dbReference type="Gene3D" id="3.80.10.10">
    <property type="entry name" value="Ribonuclease Inhibitor"/>
    <property type="match status" value="1"/>
</dbReference>
<dbReference type="InterPro" id="IPR001810">
    <property type="entry name" value="F-box_dom"/>
</dbReference>
<dbReference type="InterPro" id="IPR006553">
    <property type="entry name" value="Leu-rich_rpt_Cys-con_subtyp"/>
</dbReference>
<dbReference type="InterPro" id="IPR032675">
    <property type="entry name" value="LRR_dom_sf"/>
</dbReference>
<dbReference type="PANTHER" id="PTHR38926">
    <property type="entry name" value="F-BOX DOMAIN CONTAINING PROTEIN, EXPRESSED"/>
    <property type="match status" value="1"/>
</dbReference>
<dbReference type="PANTHER" id="PTHR38926:SF29">
    <property type="entry name" value="F-BOX PROTEIN SKIP19-RELATED"/>
    <property type="match status" value="1"/>
</dbReference>
<dbReference type="Pfam" id="PF12937">
    <property type="entry name" value="F-box-like"/>
    <property type="match status" value="1"/>
</dbReference>
<dbReference type="SMART" id="SM00256">
    <property type="entry name" value="FBOX"/>
    <property type="match status" value="1"/>
</dbReference>
<dbReference type="SMART" id="SM00367">
    <property type="entry name" value="LRR_CC"/>
    <property type="match status" value="3"/>
</dbReference>
<dbReference type="SUPFAM" id="SSF52047">
    <property type="entry name" value="RNI-like"/>
    <property type="match status" value="1"/>
</dbReference>
<dbReference type="PROSITE" id="PS50181">
    <property type="entry name" value="FBOX"/>
    <property type="match status" value="1"/>
</dbReference>
<comment type="function">
    <text evidence="1">Component of SCF(ASK-cullin-F-box) E3 ubiquitin ligase complexes, which may mediate the ubiquitination and subsequent proteasomal degradation of target proteins.</text>
</comment>
<comment type="pathway">
    <text>Protein modification; protein ubiquitination.</text>
</comment>
<comment type="subunit">
    <text evidence="1 3">Part of a SCF (ASK-cullin-F-box) protein ligase complex (By similarity). Interacts with CUL1 and SPK1B/ASK2.</text>
</comment>
<comment type="subcellular location">
    <subcellularLocation>
        <location evidence="1">Nucleus</location>
    </subcellularLocation>
</comment>
<comment type="domain">
    <text evidence="1">The F-box is necessary for the interaction with ASK proteins.</text>
</comment>
<protein>
    <recommendedName>
        <fullName>F-box protein SKIP19</fullName>
    </recommendedName>
    <alternativeName>
        <fullName>F-box/LRR-repeat protein 20</fullName>
    </alternativeName>
    <alternativeName>
        <fullName>SKP1-interacting partner 19</fullName>
    </alternativeName>
</protein>
<evidence type="ECO:0000250" key="1"/>
<evidence type="ECO:0000255" key="2">
    <source>
        <dbReference type="PROSITE-ProRule" id="PRU00080"/>
    </source>
</evidence>
<evidence type="ECO:0000269" key="3">
    <source>
    </source>
</evidence>
<evidence type="ECO:0000305" key="4"/>
<sequence>MASSSSPPAAMEVGESTNWTELPPELTSAILHRLGAIEILENAQKVCRSWRRVCKDPSMWRKIDMHNLGDLDDMDYNLEIMCRHAVDRSQGGLVDIGIWYFGTVDLLNYIAHRSSNLRSLRLIRCSQITDDGFVEAVVKLPLEELELSYCSFSVESLRVVGQCCLNMKTLKLNKHPQKENDDDALAIAETMPKLRHLQLCGNGLSDTGLNAILDNCSNLEHLDLRRCFNVNLVGDLQKRCFESVKVVRHPNDSIHDIDIGSSEDEDPYDFSDIDLMSGDDDFEGYYDFSGASDFSDYDQFDF</sequence>
<gene>
    <name type="primary">SKIP19</name>
    <name type="synonym">FBL20</name>
    <name type="ordered locus">At4g05460</name>
    <name type="ORF">C6L9.140</name>
</gene>
<accession>Q9M0U9</accession>
<accession>Q8LAJ5</accession>
<organism>
    <name type="scientific">Arabidopsis thaliana</name>
    <name type="common">Mouse-ear cress</name>
    <dbReference type="NCBI Taxonomy" id="3702"/>
    <lineage>
        <taxon>Eukaryota</taxon>
        <taxon>Viridiplantae</taxon>
        <taxon>Streptophyta</taxon>
        <taxon>Embryophyta</taxon>
        <taxon>Tracheophyta</taxon>
        <taxon>Spermatophyta</taxon>
        <taxon>Magnoliopsida</taxon>
        <taxon>eudicotyledons</taxon>
        <taxon>Gunneridae</taxon>
        <taxon>Pentapetalae</taxon>
        <taxon>rosids</taxon>
        <taxon>malvids</taxon>
        <taxon>Brassicales</taxon>
        <taxon>Brassicaceae</taxon>
        <taxon>Camelineae</taxon>
        <taxon>Arabidopsis</taxon>
    </lineage>
</organism>
<proteinExistence type="evidence at protein level"/>
<keyword id="KW-0539">Nucleus</keyword>
<keyword id="KW-1185">Reference proteome</keyword>
<keyword id="KW-0833">Ubl conjugation pathway</keyword>
<name>SKI19_ARATH</name>
<feature type="chain" id="PRO_0000272259" description="F-box protein SKIP19">
    <location>
        <begin position="1"/>
        <end position="302"/>
    </location>
</feature>
<feature type="domain" description="F-box" evidence="2">
    <location>
        <begin position="16"/>
        <end position="63"/>
    </location>
</feature>
<feature type="sequence conflict" description="In Ref. 4; AAM65310." evidence="4" ref="4">
    <original>M</original>
    <variation>I</variation>
    <location>
        <position position="191"/>
    </location>
</feature>
<reference key="1">
    <citation type="journal article" date="1999" name="Nature">
        <title>Sequence and analysis of chromosome 4 of the plant Arabidopsis thaliana.</title>
        <authorList>
            <person name="Mayer K.F.X."/>
            <person name="Schueller C."/>
            <person name="Wambutt R."/>
            <person name="Murphy G."/>
            <person name="Volckaert G."/>
            <person name="Pohl T."/>
            <person name="Duesterhoeft A."/>
            <person name="Stiekema W."/>
            <person name="Entian K.-D."/>
            <person name="Terryn N."/>
            <person name="Harris B."/>
            <person name="Ansorge W."/>
            <person name="Brandt P."/>
            <person name="Grivell L.A."/>
            <person name="Rieger M."/>
            <person name="Weichselgartner M."/>
            <person name="de Simone V."/>
            <person name="Obermaier B."/>
            <person name="Mache R."/>
            <person name="Mueller M."/>
            <person name="Kreis M."/>
            <person name="Delseny M."/>
            <person name="Puigdomenech P."/>
            <person name="Watson M."/>
            <person name="Schmidtheini T."/>
            <person name="Reichert B."/>
            <person name="Portetelle D."/>
            <person name="Perez-Alonso M."/>
            <person name="Boutry M."/>
            <person name="Bancroft I."/>
            <person name="Vos P."/>
            <person name="Hoheisel J."/>
            <person name="Zimmermann W."/>
            <person name="Wedler H."/>
            <person name="Ridley P."/>
            <person name="Langham S.-A."/>
            <person name="McCullagh B."/>
            <person name="Bilham L."/>
            <person name="Robben J."/>
            <person name="van der Schueren J."/>
            <person name="Grymonprez B."/>
            <person name="Chuang Y.-J."/>
            <person name="Vandenbussche F."/>
            <person name="Braeken M."/>
            <person name="Weltjens I."/>
            <person name="Voet M."/>
            <person name="Bastiaens I."/>
            <person name="Aert R."/>
            <person name="Defoor E."/>
            <person name="Weitzenegger T."/>
            <person name="Bothe G."/>
            <person name="Ramsperger U."/>
            <person name="Hilbert H."/>
            <person name="Braun M."/>
            <person name="Holzer E."/>
            <person name="Brandt A."/>
            <person name="Peters S."/>
            <person name="van Staveren M."/>
            <person name="Dirkse W."/>
            <person name="Mooijman P."/>
            <person name="Klein Lankhorst R."/>
            <person name="Rose M."/>
            <person name="Hauf J."/>
            <person name="Koetter P."/>
            <person name="Berneiser S."/>
            <person name="Hempel S."/>
            <person name="Feldpausch M."/>
            <person name="Lamberth S."/>
            <person name="Van den Daele H."/>
            <person name="De Keyser A."/>
            <person name="Buysshaert C."/>
            <person name="Gielen J."/>
            <person name="Villarroel R."/>
            <person name="De Clercq R."/>
            <person name="van Montagu M."/>
            <person name="Rogers J."/>
            <person name="Cronin A."/>
            <person name="Quail M.A."/>
            <person name="Bray-Allen S."/>
            <person name="Clark L."/>
            <person name="Doggett J."/>
            <person name="Hall S."/>
            <person name="Kay M."/>
            <person name="Lennard N."/>
            <person name="McLay K."/>
            <person name="Mayes R."/>
            <person name="Pettett A."/>
            <person name="Rajandream M.A."/>
            <person name="Lyne M."/>
            <person name="Benes V."/>
            <person name="Rechmann S."/>
            <person name="Borkova D."/>
            <person name="Bloecker H."/>
            <person name="Scharfe M."/>
            <person name="Grimm M."/>
            <person name="Loehnert T.-H."/>
            <person name="Dose S."/>
            <person name="de Haan M."/>
            <person name="Maarse A.C."/>
            <person name="Schaefer M."/>
            <person name="Mueller-Auer S."/>
            <person name="Gabel C."/>
            <person name="Fuchs M."/>
            <person name="Fartmann B."/>
            <person name="Granderath K."/>
            <person name="Dauner D."/>
            <person name="Herzl A."/>
            <person name="Neumann S."/>
            <person name="Argiriou A."/>
            <person name="Vitale D."/>
            <person name="Liguori R."/>
            <person name="Piravandi E."/>
            <person name="Massenet O."/>
            <person name="Quigley F."/>
            <person name="Clabauld G."/>
            <person name="Muendlein A."/>
            <person name="Felber R."/>
            <person name="Schnabl S."/>
            <person name="Hiller R."/>
            <person name="Schmidt W."/>
            <person name="Lecharny A."/>
            <person name="Aubourg S."/>
            <person name="Chefdor F."/>
            <person name="Cooke R."/>
            <person name="Berger C."/>
            <person name="Monfort A."/>
            <person name="Casacuberta E."/>
            <person name="Gibbons T."/>
            <person name="Weber N."/>
            <person name="Vandenbol M."/>
            <person name="Bargues M."/>
            <person name="Terol J."/>
            <person name="Torres A."/>
            <person name="Perez-Perez A."/>
            <person name="Purnelle B."/>
            <person name="Bent E."/>
            <person name="Johnson S."/>
            <person name="Tacon D."/>
            <person name="Jesse T."/>
            <person name="Heijnen L."/>
            <person name="Schwarz S."/>
            <person name="Scholler P."/>
            <person name="Heber S."/>
            <person name="Francs P."/>
            <person name="Bielke C."/>
            <person name="Frishman D."/>
            <person name="Haase D."/>
            <person name="Lemcke K."/>
            <person name="Mewes H.-W."/>
            <person name="Stocker S."/>
            <person name="Zaccaria P."/>
            <person name="Bevan M."/>
            <person name="Wilson R.K."/>
            <person name="de la Bastide M."/>
            <person name="Habermann K."/>
            <person name="Parnell L."/>
            <person name="Dedhia N."/>
            <person name="Gnoj L."/>
            <person name="Schutz K."/>
            <person name="Huang E."/>
            <person name="Spiegel L."/>
            <person name="Sekhon M."/>
            <person name="Murray J."/>
            <person name="Sheet P."/>
            <person name="Cordes M."/>
            <person name="Abu-Threideh J."/>
            <person name="Stoneking T."/>
            <person name="Kalicki J."/>
            <person name="Graves T."/>
            <person name="Harmon G."/>
            <person name="Edwards J."/>
            <person name="Latreille P."/>
            <person name="Courtney L."/>
            <person name="Cloud J."/>
            <person name="Abbott A."/>
            <person name="Scott K."/>
            <person name="Johnson D."/>
            <person name="Minx P."/>
            <person name="Bentley D."/>
            <person name="Fulton B."/>
            <person name="Miller N."/>
            <person name="Greco T."/>
            <person name="Kemp K."/>
            <person name="Kramer J."/>
            <person name="Fulton L."/>
            <person name="Mardis E."/>
            <person name="Dante M."/>
            <person name="Pepin K."/>
            <person name="Hillier L.W."/>
            <person name="Nelson J."/>
            <person name="Spieth J."/>
            <person name="Ryan E."/>
            <person name="Andrews S."/>
            <person name="Geisel C."/>
            <person name="Layman D."/>
            <person name="Du H."/>
            <person name="Ali J."/>
            <person name="Berghoff A."/>
            <person name="Jones K."/>
            <person name="Drone K."/>
            <person name="Cotton M."/>
            <person name="Joshu C."/>
            <person name="Antonoiu B."/>
            <person name="Zidanic M."/>
            <person name="Strong C."/>
            <person name="Sun H."/>
            <person name="Lamar B."/>
            <person name="Yordan C."/>
            <person name="Ma P."/>
            <person name="Zhong J."/>
            <person name="Preston R."/>
            <person name="Vil D."/>
            <person name="Shekher M."/>
            <person name="Matero A."/>
            <person name="Shah R."/>
            <person name="Swaby I.K."/>
            <person name="O'Shaughnessy A."/>
            <person name="Rodriguez M."/>
            <person name="Hoffman J."/>
            <person name="Till S."/>
            <person name="Granat S."/>
            <person name="Shohdy N."/>
            <person name="Hasegawa A."/>
            <person name="Hameed A."/>
            <person name="Lodhi M."/>
            <person name="Johnson A."/>
            <person name="Chen E."/>
            <person name="Marra M.A."/>
            <person name="Martienssen R."/>
            <person name="McCombie W.R."/>
        </authorList>
    </citation>
    <scope>NUCLEOTIDE SEQUENCE [LARGE SCALE GENOMIC DNA]</scope>
    <source>
        <strain>cv. Columbia</strain>
    </source>
</reference>
<reference key="2">
    <citation type="journal article" date="2017" name="Plant J.">
        <title>Araport11: a complete reannotation of the Arabidopsis thaliana reference genome.</title>
        <authorList>
            <person name="Cheng C.Y."/>
            <person name="Krishnakumar V."/>
            <person name="Chan A.P."/>
            <person name="Thibaud-Nissen F."/>
            <person name="Schobel S."/>
            <person name="Town C.D."/>
        </authorList>
    </citation>
    <scope>GENOME REANNOTATION</scope>
    <source>
        <strain>cv. Columbia</strain>
    </source>
</reference>
<reference key="3">
    <citation type="journal article" date="2003" name="Science">
        <title>Empirical analysis of transcriptional activity in the Arabidopsis genome.</title>
        <authorList>
            <person name="Yamada K."/>
            <person name="Lim J."/>
            <person name="Dale J.M."/>
            <person name="Chen H."/>
            <person name="Shinn P."/>
            <person name="Palm C.J."/>
            <person name="Southwick A.M."/>
            <person name="Wu H.C."/>
            <person name="Kim C.J."/>
            <person name="Nguyen M."/>
            <person name="Pham P.K."/>
            <person name="Cheuk R.F."/>
            <person name="Karlin-Newmann G."/>
            <person name="Liu S.X."/>
            <person name="Lam B."/>
            <person name="Sakano H."/>
            <person name="Wu T."/>
            <person name="Yu G."/>
            <person name="Miranda M."/>
            <person name="Quach H.L."/>
            <person name="Tripp M."/>
            <person name="Chang C.H."/>
            <person name="Lee J.M."/>
            <person name="Toriumi M.J."/>
            <person name="Chan M.M."/>
            <person name="Tang C.C."/>
            <person name="Onodera C.S."/>
            <person name="Deng J.M."/>
            <person name="Akiyama K."/>
            <person name="Ansari Y."/>
            <person name="Arakawa T."/>
            <person name="Banh J."/>
            <person name="Banno F."/>
            <person name="Bowser L."/>
            <person name="Brooks S.Y."/>
            <person name="Carninci P."/>
            <person name="Chao Q."/>
            <person name="Choy N."/>
            <person name="Enju A."/>
            <person name="Goldsmith A.D."/>
            <person name="Gurjal M."/>
            <person name="Hansen N.F."/>
            <person name="Hayashizaki Y."/>
            <person name="Johnson-Hopson C."/>
            <person name="Hsuan V.W."/>
            <person name="Iida K."/>
            <person name="Karnes M."/>
            <person name="Khan S."/>
            <person name="Koesema E."/>
            <person name="Ishida J."/>
            <person name="Jiang P.X."/>
            <person name="Jones T."/>
            <person name="Kawai J."/>
            <person name="Kamiya A."/>
            <person name="Meyers C."/>
            <person name="Nakajima M."/>
            <person name="Narusaka M."/>
            <person name="Seki M."/>
            <person name="Sakurai T."/>
            <person name="Satou M."/>
            <person name="Tamse R."/>
            <person name="Vaysberg M."/>
            <person name="Wallender E.K."/>
            <person name="Wong C."/>
            <person name="Yamamura Y."/>
            <person name="Yuan S."/>
            <person name="Shinozaki K."/>
            <person name="Davis R.W."/>
            <person name="Theologis A."/>
            <person name="Ecker J.R."/>
        </authorList>
    </citation>
    <scope>NUCLEOTIDE SEQUENCE [LARGE SCALE MRNA]</scope>
    <source>
        <strain>cv. Columbia</strain>
    </source>
</reference>
<reference key="4">
    <citation type="submission" date="2002-03" db="EMBL/GenBank/DDBJ databases">
        <title>Full-length cDNA from Arabidopsis thaliana.</title>
        <authorList>
            <person name="Brover V.V."/>
            <person name="Troukhan M.E."/>
            <person name="Alexandrov N.A."/>
            <person name="Lu Y.-P."/>
            <person name="Flavell R.B."/>
            <person name="Feldmann K.A."/>
        </authorList>
    </citation>
    <scope>NUCLEOTIDE SEQUENCE [LARGE SCALE MRNA]</scope>
</reference>
<reference key="5">
    <citation type="submission" date="2006-07" db="EMBL/GenBank/DDBJ databases">
        <title>Large-scale analysis of RIKEN Arabidopsis full-length (RAFL) cDNAs.</title>
        <authorList>
            <person name="Totoki Y."/>
            <person name="Seki M."/>
            <person name="Ishida J."/>
            <person name="Nakajima M."/>
            <person name="Enju A."/>
            <person name="Kamiya A."/>
            <person name="Narusaka M."/>
            <person name="Shin-i T."/>
            <person name="Nakagawa M."/>
            <person name="Sakamoto N."/>
            <person name="Oishi K."/>
            <person name="Kohara Y."/>
            <person name="Kobayashi M."/>
            <person name="Toyoda A."/>
            <person name="Sakaki Y."/>
            <person name="Sakurai T."/>
            <person name="Iida K."/>
            <person name="Akiyama K."/>
            <person name="Satou M."/>
            <person name="Toyoda T."/>
            <person name="Konagaya A."/>
            <person name="Carninci P."/>
            <person name="Kawai J."/>
            <person name="Hayashizaki Y."/>
            <person name="Shinozaki K."/>
        </authorList>
    </citation>
    <scope>NUCLEOTIDE SEQUENCE [LARGE SCALE MRNA]</scope>
    <source>
        <strain>cv. Columbia</strain>
    </source>
</reference>
<reference key="6">
    <citation type="journal article" date="2000" name="Trends Plant Sci.">
        <title>F-box proteins in Arabidopsis.</title>
        <authorList>
            <person name="Xiao W."/>
            <person name="Jang J.-C."/>
        </authorList>
    </citation>
    <scope>GENE FAMILY</scope>
    <scope>NOMENCLATURE</scope>
</reference>
<reference key="7">
    <citation type="journal article" date="2003" name="Plant J.">
        <title>Protein interaction analysis of SCF ubiquitin E3 ligase subunits from Arabidopsis.</title>
        <authorList>
            <person name="Risseeuw E.P."/>
            <person name="Daskalchuk T.E."/>
            <person name="Banks T.W."/>
            <person name="Liu E."/>
            <person name="Cotelesage J."/>
            <person name="Hellmann H."/>
            <person name="Estelle M."/>
            <person name="Somers D.E."/>
            <person name="Crosby W.L."/>
        </authorList>
    </citation>
    <scope>INTERACTION WITH CUL1 AND SPK1B/ASK2</scope>
</reference>